<sequence length="435" mass="49446">MSEFRQATDAFASNPVESKQEIRNYTMNFGPQHPAAHGVLRLILEMDGETVVRADPHIGLLHRGTEKLAESKPFNQSVPYMDRLDYVSMMCNEHAYVRAIESLMGIEAPERAQYIRTMFDEITRIKNHLMWVGSNALDLGAMAVMLYAFREREELMDVYEAVSGARMHAAYYRPGGVYRDLPDRMPQYKESRWHKGGALKKRNAGREGTMLDFLEEFTNTFPARVDEYETLLTDNRIWKQRTVDVGIISPDLARAWGMTGPMLRGSGIEWDLRKKQPYAKYDAVDFDIPVGTNGDCYDRYLVRVAEMRESNRIIKQCVKWLKANPGPVMVTNFKVAPPSREGMKDDMEALIHHFKLFSEGYCVPAGETYSAVEAPKGEFGCYLMSDGANKPFRVHLRAPGFAHLSSMDAVVRGYLLADVVAMIGTYDLVFGEVDR</sequence>
<gene>
    <name evidence="1" type="primary">nuoD</name>
    <name type="ordered locus">XCV2850</name>
</gene>
<comment type="function">
    <text evidence="1">NDH-1 shuttles electrons from NADH, via FMN and iron-sulfur (Fe-S) centers, to quinones in the respiratory chain. The immediate electron acceptor for the enzyme in this species is believed to be ubiquinone. Couples the redox reaction to proton translocation (for every two electrons transferred, four hydrogen ions are translocated across the cytoplasmic membrane), and thus conserves the redox energy in a proton gradient.</text>
</comment>
<comment type="catalytic activity">
    <reaction evidence="1">
        <text>a quinone + NADH + 5 H(+)(in) = a quinol + NAD(+) + 4 H(+)(out)</text>
        <dbReference type="Rhea" id="RHEA:57888"/>
        <dbReference type="ChEBI" id="CHEBI:15378"/>
        <dbReference type="ChEBI" id="CHEBI:24646"/>
        <dbReference type="ChEBI" id="CHEBI:57540"/>
        <dbReference type="ChEBI" id="CHEBI:57945"/>
        <dbReference type="ChEBI" id="CHEBI:132124"/>
    </reaction>
</comment>
<comment type="subunit">
    <text evidence="1">NDH-1 is composed of 14 different subunits. Subunits NuoB, C, D, E, F, and G constitute the peripheral sector of the complex.</text>
</comment>
<comment type="subcellular location">
    <subcellularLocation>
        <location evidence="1">Cell inner membrane</location>
        <topology evidence="1">Peripheral membrane protein</topology>
        <orientation evidence="1">Cytoplasmic side</orientation>
    </subcellularLocation>
</comment>
<comment type="similarity">
    <text evidence="1">Belongs to the complex I 49 kDa subunit family.</text>
</comment>
<organism>
    <name type="scientific">Xanthomonas euvesicatoria pv. vesicatoria (strain 85-10)</name>
    <name type="common">Xanthomonas campestris pv. vesicatoria</name>
    <dbReference type="NCBI Taxonomy" id="316273"/>
    <lineage>
        <taxon>Bacteria</taxon>
        <taxon>Pseudomonadati</taxon>
        <taxon>Pseudomonadota</taxon>
        <taxon>Gammaproteobacteria</taxon>
        <taxon>Lysobacterales</taxon>
        <taxon>Lysobacteraceae</taxon>
        <taxon>Xanthomonas</taxon>
    </lineage>
</organism>
<protein>
    <recommendedName>
        <fullName evidence="1">NADH-quinone oxidoreductase subunit D</fullName>
        <ecNumber evidence="1">7.1.1.-</ecNumber>
    </recommendedName>
    <alternativeName>
        <fullName evidence="1">NADH dehydrogenase I subunit D</fullName>
    </alternativeName>
    <alternativeName>
        <fullName evidence="1">NDH-1 subunit D</fullName>
    </alternativeName>
</protein>
<proteinExistence type="inferred from homology"/>
<reference key="1">
    <citation type="journal article" date="2005" name="J. Bacteriol.">
        <title>Insights into genome plasticity and pathogenicity of the plant pathogenic Bacterium Xanthomonas campestris pv. vesicatoria revealed by the complete genome sequence.</title>
        <authorList>
            <person name="Thieme F."/>
            <person name="Koebnik R."/>
            <person name="Bekel T."/>
            <person name="Berger C."/>
            <person name="Boch J."/>
            <person name="Buettner D."/>
            <person name="Caldana C."/>
            <person name="Gaigalat L."/>
            <person name="Goesmann A."/>
            <person name="Kay S."/>
            <person name="Kirchner O."/>
            <person name="Lanz C."/>
            <person name="Linke B."/>
            <person name="McHardy A.C."/>
            <person name="Meyer F."/>
            <person name="Mittenhuber G."/>
            <person name="Nies D.H."/>
            <person name="Niesbach-Kloesgen U."/>
            <person name="Patschkowski T."/>
            <person name="Rueckert C."/>
            <person name="Rupp O."/>
            <person name="Schneiker S."/>
            <person name="Schuster S.C."/>
            <person name="Vorhoelter F.J."/>
            <person name="Weber E."/>
            <person name="Puehler A."/>
            <person name="Bonas U."/>
            <person name="Bartels D."/>
            <person name="Kaiser O."/>
        </authorList>
    </citation>
    <scope>NUCLEOTIDE SEQUENCE [LARGE SCALE GENOMIC DNA]</scope>
    <source>
        <strain>85-10</strain>
    </source>
</reference>
<dbReference type="EC" id="7.1.1.-" evidence="1"/>
<dbReference type="EMBL" id="AM039952">
    <property type="protein sequence ID" value="CAJ24529.1"/>
    <property type="molecule type" value="Genomic_DNA"/>
</dbReference>
<dbReference type="RefSeq" id="WP_008570969.1">
    <property type="nucleotide sequence ID" value="NZ_CP017190.1"/>
</dbReference>
<dbReference type="SMR" id="Q3BRN2"/>
<dbReference type="STRING" id="456327.BJD11_08620"/>
<dbReference type="KEGG" id="xcv:XCV2850"/>
<dbReference type="eggNOG" id="COG0649">
    <property type="taxonomic scope" value="Bacteria"/>
</dbReference>
<dbReference type="HOGENOM" id="CLU_015134_1_1_6"/>
<dbReference type="Proteomes" id="UP000007069">
    <property type="component" value="Chromosome"/>
</dbReference>
<dbReference type="GO" id="GO:0005886">
    <property type="term" value="C:plasma membrane"/>
    <property type="evidence" value="ECO:0007669"/>
    <property type="project" value="UniProtKB-SubCell"/>
</dbReference>
<dbReference type="GO" id="GO:0051287">
    <property type="term" value="F:NAD binding"/>
    <property type="evidence" value="ECO:0007669"/>
    <property type="project" value="InterPro"/>
</dbReference>
<dbReference type="GO" id="GO:0050136">
    <property type="term" value="F:NADH:ubiquinone reductase (non-electrogenic) activity"/>
    <property type="evidence" value="ECO:0007669"/>
    <property type="project" value="UniProtKB-UniRule"/>
</dbReference>
<dbReference type="GO" id="GO:0048038">
    <property type="term" value="F:quinone binding"/>
    <property type="evidence" value="ECO:0007669"/>
    <property type="project" value="UniProtKB-KW"/>
</dbReference>
<dbReference type="FunFam" id="1.10.645.10:FF:000005">
    <property type="entry name" value="NADH-quinone oxidoreductase subunit D"/>
    <property type="match status" value="1"/>
</dbReference>
<dbReference type="Gene3D" id="1.10.645.10">
    <property type="entry name" value="Cytochrome-c3 Hydrogenase, chain B"/>
    <property type="match status" value="1"/>
</dbReference>
<dbReference type="HAMAP" id="MF_01358">
    <property type="entry name" value="NDH1_NuoD"/>
    <property type="match status" value="1"/>
</dbReference>
<dbReference type="InterPro" id="IPR001135">
    <property type="entry name" value="NADH_Q_OxRdtase_suD"/>
</dbReference>
<dbReference type="InterPro" id="IPR014029">
    <property type="entry name" value="NADH_UbQ_OxRdtase_49kDa_CS"/>
</dbReference>
<dbReference type="InterPro" id="IPR022885">
    <property type="entry name" value="NDH1_su_D/H"/>
</dbReference>
<dbReference type="InterPro" id="IPR029014">
    <property type="entry name" value="NiFe-Hase_large"/>
</dbReference>
<dbReference type="NCBIfam" id="TIGR01962">
    <property type="entry name" value="NuoD"/>
    <property type="match status" value="1"/>
</dbReference>
<dbReference type="NCBIfam" id="NF004739">
    <property type="entry name" value="PRK06075.1"/>
    <property type="match status" value="1"/>
</dbReference>
<dbReference type="PANTHER" id="PTHR11993:SF10">
    <property type="entry name" value="NADH DEHYDROGENASE [UBIQUINONE] IRON-SULFUR PROTEIN 2, MITOCHONDRIAL"/>
    <property type="match status" value="1"/>
</dbReference>
<dbReference type="PANTHER" id="PTHR11993">
    <property type="entry name" value="NADH-UBIQUINONE OXIDOREDUCTASE 49 KDA SUBUNIT"/>
    <property type="match status" value="1"/>
</dbReference>
<dbReference type="Pfam" id="PF00346">
    <property type="entry name" value="Complex1_49kDa"/>
    <property type="match status" value="1"/>
</dbReference>
<dbReference type="SUPFAM" id="SSF56762">
    <property type="entry name" value="HydB/Nqo4-like"/>
    <property type="match status" value="1"/>
</dbReference>
<dbReference type="PROSITE" id="PS00535">
    <property type="entry name" value="COMPLEX1_49K"/>
    <property type="match status" value="1"/>
</dbReference>
<keyword id="KW-0997">Cell inner membrane</keyword>
<keyword id="KW-1003">Cell membrane</keyword>
<keyword id="KW-0472">Membrane</keyword>
<keyword id="KW-0520">NAD</keyword>
<keyword id="KW-0874">Quinone</keyword>
<keyword id="KW-1278">Translocase</keyword>
<keyword id="KW-0813">Transport</keyword>
<keyword id="KW-0830">Ubiquinone</keyword>
<accession>Q3BRN2</accession>
<feature type="chain" id="PRO_0000371952" description="NADH-quinone oxidoreductase subunit D">
    <location>
        <begin position="1"/>
        <end position="435"/>
    </location>
</feature>
<evidence type="ECO:0000255" key="1">
    <source>
        <dbReference type="HAMAP-Rule" id="MF_01358"/>
    </source>
</evidence>
<name>NUOD_XANE5</name>